<evidence type="ECO:0000255" key="1">
    <source>
        <dbReference type="HAMAP-Rule" id="MF_00027"/>
    </source>
</evidence>
<evidence type="ECO:0000269" key="2">
    <source>
    </source>
</evidence>
<evidence type="ECO:0000269" key="3">
    <source>
    </source>
</evidence>
<evidence type="ECO:0000303" key="4">
    <source>
    </source>
</evidence>
<evidence type="ECO:0000305" key="5"/>
<evidence type="ECO:0000305" key="6">
    <source>
    </source>
</evidence>
<sequence length="434" mass="45705">MSGLLIAAPASGSGKTTVTLGLMRALKRRGVAIAPGKAGPDYIDPAFHAAATGEPCFNYDPWAMRPELLLANASHVASGGRTLIVEAMMGLHDGAADGSGTPADLAATLNLAVILVVDCARMSQSVAALVRGYADHRDDIRVVGVILNKVGSDRHEMMLRDALGKVRMPVFGVLRQDSALQLPERHLGLVQAGEHSALEGFIEAAAARVEAACDLDAIRLIATIFPQVPAAADAERLRPLGQRIAVARDIAFAFCYEHLLYGWRQGGAEISFFSPLADEGPDAAADAVYLPGGYPELHAGQLSAAARFRSGMHSAAERGARIFGECGGYMVLGEGLVAADGTRYDMLGLLPLVTSFAERRRHLGYRRVVPVDNAFFDGPMTAHEFHYATIVAEGAADRLFAVSDAAGEDLGQAGLRRGPVAGSFMHLIDVAGAA</sequence>
<feature type="initiator methionine" description="Removed" evidence="3">
    <location>
        <position position="1"/>
    </location>
</feature>
<feature type="chain" id="PRO_0000141265" description="Hydrogenobyrinate a,c-diamide synthase">
    <location>
        <begin position="2"/>
        <end position="434"/>
    </location>
</feature>
<feature type="domain" description="GATase cobBQ-type" evidence="1">
    <location>
        <begin position="243"/>
        <end position="434"/>
    </location>
</feature>
<feature type="active site" description="Nucleophile" evidence="1">
    <location>
        <position position="326"/>
    </location>
</feature>
<feature type="site" description="Increases nucleophilicity of active site Cys" evidence="1">
    <location>
        <position position="426"/>
    </location>
</feature>
<dbReference type="EC" id="6.3.5.9" evidence="1 2"/>
<dbReference type="EMBL" id="M59236">
    <property type="protein sequence ID" value="AAA25774.1"/>
    <property type="molecule type" value="Genomic_DNA"/>
</dbReference>
<dbReference type="SMR" id="P21632"/>
<dbReference type="BioCyc" id="MetaCyc:MONOMER-116"/>
<dbReference type="SABIO-RK" id="P21632"/>
<dbReference type="UniPathway" id="UPA00148">
    <property type="reaction ID" value="UER00220"/>
</dbReference>
<dbReference type="GO" id="GO:0005524">
    <property type="term" value="F:ATP binding"/>
    <property type="evidence" value="ECO:0007669"/>
    <property type="project" value="UniProtKB-UniRule"/>
</dbReference>
<dbReference type="GO" id="GO:0042242">
    <property type="term" value="F:cobyrinic acid a,c-diamide synthase activity"/>
    <property type="evidence" value="ECO:0007669"/>
    <property type="project" value="InterPro"/>
</dbReference>
<dbReference type="GO" id="GO:0043802">
    <property type="term" value="F:hydrogenobyrinic acid a,c-diamide synthase (glutamine-hydrolysing) activity"/>
    <property type="evidence" value="ECO:0007669"/>
    <property type="project" value="UniProtKB-UniRule"/>
</dbReference>
<dbReference type="GO" id="GO:0009236">
    <property type="term" value="P:cobalamin biosynthetic process"/>
    <property type="evidence" value="ECO:0007669"/>
    <property type="project" value="UniProtKB-UniRule"/>
</dbReference>
<dbReference type="Gene3D" id="3.40.50.880">
    <property type="match status" value="1"/>
</dbReference>
<dbReference type="Gene3D" id="3.40.50.300">
    <property type="entry name" value="P-loop containing nucleotide triphosphate hydrolases"/>
    <property type="match status" value="1"/>
</dbReference>
<dbReference type="HAMAP" id="MF_00027">
    <property type="entry name" value="CobB_CbiA"/>
    <property type="match status" value="1"/>
</dbReference>
<dbReference type="InterPro" id="IPR004484">
    <property type="entry name" value="CbiA/CobB_synth"/>
</dbReference>
<dbReference type="InterPro" id="IPR029062">
    <property type="entry name" value="Class_I_gatase-like"/>
</dbReference>
<dbReference type="InterPro" id="IPR002586">
    <property type="entry name" value="CobQ/CobB/MinD/ParA_Nub-bd_dom"/>
</dbReference>
<dbReference type="InterPro" id="IPR011698">
    <property type="entry name" value="GATase_3"/>
</dbReference>
<dbReference type="InterPro" id="IPR027417">
    <property type="entry name" value="P-loop_NTPase"/>
</dbReference>
<dbReference type="NCBIfam" id="TIGR00379">
    <property type="entry name" value="cobB"/>
    <property type="match status" value="1"/>
</dbReference>
<dbReference type="NCBIfam" id="NF002204">
    <property type="entry name" value="PRK01077.1"/>
    <property type="match status" value="1"/>
</dbReference>
<dbReference type="PANTHER" id="PTHR43873">
    <property type="entry name" value="COBYRINATE A,C-DIAMIDE SYNTHASE"/>
    <property type="match status" value="1"/>
</dbReference>
<dbReference type="PANTHER" id="PTHR43873:SF1">
    <property type="entry name" value="COBYRINATE A,C-DIAMIDE SYNTHASE"/>
    <property type="match status" value="1"/>
</dbReference>
<dbReference type="Pfam" id="PF01656">
    <property type="entry name" value="CbiA"/>
    <property type="match status" value="1"/>
</dbReference>
<dbReference type="Pfam" id="PF07685">
    <property type="entry name" value="GATase_3"/>
    <property type="match status" value="1"/>
</dbReference>
<dbReference type="SUPFAM" id="SSF52317">
    <property type="entry name" value="Class I glutamine amidotransferase-like"/>
    <property type="match status" value="1"/>
</dbReference>
<dbReference type="SUPFAM" id="SSF52540">
    <property type="entry name" value="P-loop containing nucleoside triphosphate hydrolases"/>
    <property type="match status" value="1"/>
</dbReference>
<dbReference type="PROSITE" id="PS51274">
    <property type="entry name" value="GATASE_COBBQ"/>
    <property type="match status" value="1"/>
</dbReference>
<proteinExistence type="evidence at protein level"/>
<name>COBB_SINSX</name>
<protein>
    <recommendedName>
        <fullName evidence="1 6">Hydrogenobyrinate a,c-diamide synthase</fullName>
        <ecNumber evidence="1 2">6.3.5.9</ecNumber>
    </recommendedName>
    <alternativeName>
        <fullName evidence="1 6">Hydrogenobyrinic acid a,c-diamide synthase</fullName>
    </alternativeName>
</protein>
<accession>P21632</accession>
<comment type="function">
    <text evidence="1 2 5">Catalyzes the ATP-dependent amidation of the two carboxylate groups at positions a and c of hydrogenobyrinate, using either L-glutamine or ammonia as the nitrogen source. To a much lesser extent, can also use cobyrinate as substrate in vitro, but the physiological substrate is indeed hydrogenobyrinate, as part of the aerobic pathway for cobalamin biosynthesis.</text>
</comment>
<comment type="catalytic activity">
    <reaction evidence="1 2">
        <text>hydrogenobyrinate + 2 L-glutamine + 2 ATP + 2 H2O = hydrogenobyrinate a,c-diamide + 2 L-glutamate + 2 ADP + 2 phosphate + 2 H(+)</text>
        <dbReference type="Rhea" id="RHEA:12544"/>
        <dbReference type="ChEBI" id="CHEBI:15377"/>
        <dbReference type="ChEBI" id="CHEBI:15378"/>
        <dbReference type="ChEBI" id="CHEBI:29985"/>
        <dbReference type="ChEBI" id="CHEBI:30616"/>
        <dbReference type="ChEBI" id="CHEBI:43474"/>
        <dbReference type="ChEBI" id="CHEBI:58359"/>
        <dbReference type="ChEBI" id="CHEBI:77873"/>
        <dbReference type="ChEBI" id="CHEBI:77874"/>
        <dbReference type="ChEBI" id="CHEBI:456216"/>
        <dbReference type="EC" id="6.3.5.9"/>
    </reaction>
</comment>
<comment type="cofactor">
    <cofactor evidence="1 2">
        <name>Mg(2+)</name>
        <dbReference type="ChEBI" id="CHEBI:18420"/>
    </cofactor>
</comment>
<comment type="biophysicochemical properties">
    <kinetics>
        <KM evidence="2">0.41 uM for hydrogenobyrinate</KM>
        <KM evidence="2">0.21 uM for hydrogenobyrinate c-monoamide</KM>
        <KM evidence="2">30.2 uM for ATP</KM>
        <KM evidence="2">20.3 uM for glutamine</KM>
        <KM evidence="2">12 mM for ammonia</KM>
        <KM evidence="2">250 uM for cobyrinate</KM>
        <Vmax evidence="2">1390.0 nmol/h/mg enzyme with hydrogenobyrinate as substrate</Vmax>
        <Vmax evidence="2">574.0 nmol/h/mg enzyme with hydrogenobyrinate c-monoamide as substrate</Vmax>
        <Vmax evidence="2">800.0 nmol/h/mg enzyme with cobyrinate as substrate</Vmax>
    </kinetics>
    <phDependence>
        <text evidence="2">Optimum pH is around 7.3.</text>
    </phDependence>
</comment>
<comment type="pathway">
    <text evidence="1 5">Cofactor biosynthesis; adenosylcobalamin biosynthesis; cob(II)yrinate a,c-diamide from precorrin-2 (aerobic route): step 9/10.</text>
</comment>
<comment type="subunit">
    <text evidence="2">Homodimer.</text>
</comment>
<comment type="domain">
    <text evidence="1">Comprises of two domains. The C-terminal domain contains the binding site for glutamine and catalyzes the hydrolysis of this substrate to glutamate and ammonia. The N-terminal domain is anticipated to bind ATP and hydrogenobyrinate and catalyzes the ultimate synthesis of the diamide product. The ammonia produced via the glutaminase domain is probably translocated to the adjacent domain via a molecular tunnel, where it reacts with an activated intermediate.</text>
</comment>
<comment type="miscellaneous">
    <text evidence="1 2">The a and c carboxylates of hydrogenobyrinate are likely activated for nucleophilic attack via formation of a phosphorylated intermediate by ATP. CobB catalyzes first the amidation of the c-carboxylate, and then that of the a-carboxylate.</text>
</comment>
<comment type="similarity">
    <text evidence="1">Belongs to the CobB/CbiA family.</text>
</comment>
<comment type="caution">
    <text evidence="5">Was originally thought to originate from Pseudomonas denitrificans, but similarity searches show that the sequence is much closer to Sinorhizobium. The entry's taxonomy has been changed.</text>
</comment>
<organism>
    <name type="scientific">Sinorhizobium sp</name>
    <dbReference type="NCBI Taxonomy" id="42445"/>
    <lineage>
        <taxon>Bacteria</taxon>
        <taxon>Pseudomonadati</taxon>
        <taxon>Pseudomonadota</taxon>
        <taxon>Alphaproteobacteria</taxon>
        <taxon>Hyphomicrobiales</taxon>
        <taxon>Rhizobiaceae</taxon>
        <taxon>Sinorhizobium/Ensifer group</taxon>
        <taxon>Sinorhizobium</taxon>
    </lineage>
</organism>
<gene>
    <name evidence="1 4" type="primary">cobB</name>
</gene>
<keyword id="KW-0067">ATP-binding</keyword>
<keyword id="KW-0169">Cobalamin biosynthesis</keyword>
<keyword id="KW-0903">Direct protein sequencing</keyword>
<keyword id="KW-0315">Glutamine amidotransferase</keyword>
<keyword id="KW-0436">Ligase</keyword>
<keyword id="KW-0460">Magnesium</keyword>
<keyword id="KW-0547">Nucleotide-binding</keyword>
<reference key="1">
    <citation type="journal article" date="1990" name="J. Bacteriol.">
        <title>Nucleotide sequence of a Pseudomonas denitrificans 5.4-kilobase DNA fragment containing five cob genes and identification of structural genes encoding S-adenosyl-L-methionine: uroporphyrinogen III methyltransferase and cobyrinic acid a,c-diamide synthase.</title>
        <authorList>
            <person name="Crouzet J."/>
            <person name="Cauchois L."/>
            <person name="Blanche F."/>
            <person name="Debussche L."/>
            <person name="Thibaut D."/>
            <person name="Rouyez M.-C."/>
            <person name="Rigault S."/>
            <person name="Mayaux J.-F."/>
            <person name="Cameron B."/>
        </authorList>
    </citation>
    <scope>NUCLEOTIDE SEQUENCE [GENOMIC DNA]</scope>
    <scope>PROTEIN SEQUENCE OF 2-16</scope>
    <source>
        <strain>SC510</strain>
    </source>
</reference>
<reference key="2">
    <citation type="journal article" date="1990" name="J. Bacteriol.">
        <title>Purification and characterization of cobyrinic acid a,c-diamide synthase from Pseudomonas denitrificans.</title>
        <authorList>
            <person name="Debussche L."/>
            <person name="Thibaut D."/>
            <person name="Cameron B."/>
            <person name="Crouzet J."/>
            <person name="Blanche F."/>
        </authorList>
    </citation>
    <scope>FUNCTION</scope>
    <scope>CATALYTIC ACTIVITY</scope>
    <scope>SUBSTRATE SPECIFICITY</scope>
    <scope>COFACTOR</scope>
    <scope>BIOPHYSICOCHEMICAL PROPERTIES</scope>
    <scope>SUBUNIT</scope>
    <source>
        <strain>SC510</strain>
    </source>
</reference>